<proteinExistence type="inferred from homology"/>
<keyword id="KW-0413">Isomerase</keyword>
<keyword id="KW-0539">Nucleus</keyword>
<keyword id="KW-1185">Reference proteome</keyword>
<keyword id="KW-0697">Rotamase</keyword>
<name>FKBP3_YARLI</name>
<organism>
    <name type="scientific">Yarrowia lipolytica (strain CLIB 122 / E 150)</name>
    <name type="common">Yeast</name>
    <name type="synonym">Candida lipolytica</name>
    <dbReference type="NCBI Taxonomy" id="284591"/>
    <lineage>
        <taxon>Eukaryota</taxon>
        <taxon>Fungi</taxon>
        <taxon>Dikarya</taxon>
        <taxon>Ascomycota</taxon>
        <taxon>Saccharomycotina</taxon>
        <taxon>Dipodascomycetes</taxon>
        <taxon>Dipodascales</taxon>
        <taxon>Dipodascales incertae sedis</taxon>
        <taxon>Yarrowia</taxon>
    </lineage>
</organism>
<sequence>MSNNANNCLPLASYTLAVFPGIPVAPIEQDFPVSVRITMAAIDPARIEGDEEEPATLRILKPADNFDDEDDEDDEDEDDDDEDDEVSAEDMAQIKKLIAANEDGLDEVEGGDDDEDDDEDDEMEFEEDDEDDDDEGEIEDFVVCTLSPKFGYQQTLDLVITPGEQIMFEVTGSYAIHLSGNYIEHPYDMEDEDELLALGEDDEDDEDELDEGEYDLSPDEDEVINGDERLVELMEQDDEDDEDDEDEEEEPVVEPKKILKRAAEEKKQEKAAKKAKVAFTKNLEQGPTPSEPKPKLVTRQLEGGVKIEDRTVGEGPSAKVGSKVGVRYVGKLANGKVFDSNSKGKPFYFSVGKGEVIRGWDIGVQGMKVKGERRIIIPPGMAYGKQKLPGIPPNSQLTFDVKVVNIK</sequence>
<protein>
    <recommendedName>
        <fullName>FK506-binding protein 3</fullName>
        <ecNumber>5.2.1.8</ecNumber>
    </recommendedName>
    <alternativeName>
        <fullName>Peptidyl-prolyl cis-trans isomerase</fullName>
        <shortName>PPIase</shortName>
    </alternativeName>
    <alternativeName>
        <fullName>Rotamase</fullName>
    </alternativeName>
</protein>
<reference key="1">
    <citation type="journal article" date="2004" name="Nature">
        <title>Genome evolution in yeasts.</title>
        <authorList>
            <person name="Dujon B."/>
            <person name="Sherman D."/>
            <person name="Fischer G."/>
            <person name="Durrens P."/>
            <person name="Casaregola S."/>
            <person name="Lafontaine I."/>
            <person name="de Montigny J."/>
            <person name="Marck C."/>
            <person name="Neuveglise C."/>
            <person name="Talla E."/>
            <person name="Goffard N."/>
            <person name="Frangeul L."/>
            <person name="Aigle M."/>
            <person name="Anthouard V."/>
            <person name="Babour A."/>
            <person name="Barbe V."/>
            <person name="Barnay S."/>
            <person name="Blanchin S."/>
            <person name="Beckerich J.-M."/>
            <person name="Beyne E."/>
            <person name="Bleykasten C."/>
            <person name="Boisrame A."/>
            <person name="Boyer J."/>
            <person name="Cattolico L."/>
            <person name="Confanioleri F."/>
            <person name="de Daruvar A."/>
            <person name="Despons L."/>
            <person name="Fabre E."/>
            <person name="Fairhead C."/>
            <person name="Ferry-Dumazet H."/>
            <person name="Groppi A."/>
            <person name="Hantraye F."/>
            <person name="Hennequin C."/>
            <person name="Jauniaux N."/>
            <person name="Joyet P."/>
            <person name="Kachouri R."/>
            <person name="Kerrest A."/>
            <person name="Koszul R."/>
            <person name="Lemaire M."/>
            <person name="Lesur I."/>
            <person name="Ma L."/>
            <person name="Muller H."/>
            <person name="Nicaud J.-M."/>
            <person name="Nikolski M."/>
            <person name="Oztas S."/>
            <person name="Ozier-Kalogeropoulos O."/>
            <person name="Pellenz S."/>
            <person name="Potier S."/>
            <person name="Richard G.-F."/>
            <person name="Straub M.-L."/>
            <person name="Suleau A."/>
            <person name="Swennen D."/>
            <person name="Tekaia F."/>
            <person name="Wesolowski-Louvel M."/>
            <person name="Westhof E."/>
            <person name="Wirth B."/>
            <person name="Zeniou-Meyer M."/>
            <person name="Zivanovic Y."/>
            <person name="Bolotin-Fukuhara M."/>
            <person name="Thierry A."/>
            <person name="Bouchier C."/>
            <person name="Caudron B."/>
            <person name="Scarpelli C."/>
            <person name="Gaillardin C."/>
            <person name="Weissenbach J."/>
            <person name="Wincker P."/>
            <person name="Souciet J.-L."/>
        </authorList>
    </citation>
    <scope>NUCLEOTIDE SEQUENCE [LARGE SCALE GENOMIC DNA]</scope>
    <source>
        <strain>CLIB 122 / E 150</strain>
    </source>
</reference>
<dbReference type="EC" id="5.2.1.8"/>
<dbReference type="EMBL" id="CR382131">
    <property type="protein sequence ID" value="CAG80086.1"/>
    <property type="molecule type" value="Genomic_DNA"/>
</dbReference>
<dbReference type="RefSeq" id="XP_504483.1">
    <property type="nucleotide sequence ID" value="XM_504483.1"/>
</dbReference>
<dbReference type="SMR" id="Q6C4C9"/>
<dbReference type="FunCoup" id="Q6C4C9">
    <property type="interactions" value="609"/>
</dbReference>
<dbReference type="STRING" id="284591.Q6C4C9"/>
<dbReference type="EnsemblFungi" id="CAG80086">
    <property type="protein sequence ID" value="CAG80086"/>
    <property type="gene ID" value="YALI0_E27808g"/>
</dbReference>
<dbReference type="KEGG" id="yli:2912220"/>
<dbReference type="VEuPathDB" id="FungiDB:YALI0_E27808g"/>
<dbReference type="HOGENOM" id="CLU_022297_3_1_1"/>
<dbReference type="InParanoid" id="Q6C4C9"/>
<dbReference type="OMA" id="CPPHMAY"/>
<dbReference type="OrthoDB" id="121933at4891"/>
<dbReference type="Proteomes" id="UP000001300">
    <property type="component" value="Chromosome E"/>
</dbReference>
<dbReference type="GO" id="GO:0000785">
    <property type="term" value="C:chromatin"/>
    <property type="evidence" value="ECO:0000318"/>
    <property type="project" value="GO_Central"/>
</dbReference>
<dbReference type="GO" id="GO:0005730">
    <property type="term" value="C:nucleolus"/>
    <property type="evidence" value="ECO:0000318"/>
    <property type="project" value="GO_Central"/>
</dbReference>
<dbReference type="GO" id="GO:0003755">
    <property type="term" value="F:peptidyl-prolyl cis-trans isomerase activity"/>
    <property type="evidence" value="ECO:0000318"/>
    <property type="project" value="GO_Central"/>
</dbReference>
<dbReference type="FunFam" id="3.10.50.40:FF:000006">
    <property type="entry name" value="Peptidyl-prolyl cis-trans isomerase"/>
    <property type="match status" value="1"/>
</dbReference>
<dbReference type="Gene3D" id="3.10.50.40">
    <property type="match status" value="1"/>
</dbReference>
<dbReference type="Gene3D" id="2.60.120.340">
    <property type="entry name" value="Nucleoplasmin core domain"/>
    <property type="match status" value="1"/>
</dbReference>
<dbReference type="InterPro" id="IPR018247">
    <property type="entry name" value="EF_Hand_1_Ca_BS"/>
</dbReference>
<dbReference type="InterPro" id="IPR041232">
    <property type="entry name" value="NPL"/>
</dbReference>
<dbReference type="InterPro" id="IPR046357">
    <property type="entry name" value="PPIase_dom_sf"/>
</dbReference>
<dbReference type="InterPro" id="IPR001179">
    <property type="entry name" value="PPIase_FKBP_dom"/>
</dbReference>
<dbReference type="InterPro" id="IPR023566">
    <property type="entry name" value="PPIase_Fpr3/Fpr4-like"/>
</dbReference>
<dbReference type="PANTHER" id="PTHR43811:SF19">
    <property type="entry name" value="39 KDA FK506-BINDING NUCLEAR PROTEIN"/>
    <property type="match status" value="1"/>
</dbReference>
<dbReference type="PANTHER" id="PTHR43811">
    <property type="entry name" value="FKBP-TYPE PEPTIDYL-PROLYL CIS-TRANS ISOMERASE FKPA"/>
    <property type="match status" value="1"/>
</dbReference>
<dbReference type="Pfam" id="PF00254">
    <property type="entry name" value="FKBP_C"/>
    <property type="match status" value="1"/>
</dbReference>
<dbReference type="Pfam" id="PF17800">
    <property type="entry name" value="NPL"/>
    <property type="match status" value="1"/>
</dbReference>
<dbReference type="PIRSF" id="PIRSF001473">
    <property type="entry name" value="FK506-bp_FPR3"/>
    <property type="match status" value="1"/>
</dbReference>
<dbReference type="SUPFAM" id="SSF54534">
    <property type="entry name" value="FKBP-like"/>
    <property type="match status" value="1"/>
</dbReference>
<dbReference type="PROSITE" id="PS50059">
    <property type="entry name" value="FKBP_PPIASE"/>
    <property type="match status" value="1"/>
</dbReference>
<comment type="function">
    <text evidence="1">PPIases accelerate the folding of proteins. It catalyzes the cis-trans isomerization of proline imidic peptide bonds in oligopeptides (By similarity).</text>
</comment>
<comment type="catalytic activity">
    <reaction>
        <text>[protein]-peptidylproline (omega=180) = [protein]-peptidylproline (omega=0)</text>
        <dbReference type="Rhea" id="RHEA:16237"/>
        <dbReference type="Rhea" id="RHEA-COMP:10747"/>
        <dbReference type="Rhea" id="RHEA-COMP:10748"/>
        <dbReference type="ChEBI" id="CHEBI:83833"/>
        <dbReference type="ChEBI" id="CHEBI:83834"/>
        <dbReference type="EC" id="5.2.1.8"/>
    </reaction>
</comment>
<comment type="activity regulation">
    <text evidence="1">Inhibited by both FK506 and rapamycin.</text>
</comment>
<comment type="subcellular location">
    <subcellularLocation>
        <location evidence="1">Nucleus</location>
        <location evidence="1">Nucleolus</location>
    </subcellularLocation>
</comment>
<comment type="similarity">
    <text evidence="4">Belongs to the FKBP-type PPIase family. FKBP3/4 subfamily.</text>
</comment>
<gene>
    <name type="primary">FPR3</name>
    <name type="ordered locus">YALI0E27808g</name>
</gene>
<feature type="chain" id="PRO_0000233086" description="FK506-binding protein 3">
    <location>
        <begin position="1"/>
        <end position="407"/>
    </location>
</feature>
<feature type="domain" description="PPIase FKBP-type" evidence="2">
    <location>
        <begin position="321"/>
        <end position="407"/>
    </location>
</feature>
<feature type="region of interest" description="Disordered" evidence="3">
    <location>
        <begin position="46"/>
        <end position="136"/>
    </location>
</feature>
<feature type="region of interest" description="Disordered" evidence="3">
    <location>
        <begin position="191"/>
        <end position="223"/>
    </location>
</feature>
<feature type="region of interest" description="Disordered" evidence="3">
    <location>
        <begin position="236"/>
        <end position="297"/>
    </location>
</feature>
<feature type="compositionally biased region" description="Acidic residues" evidence="3">
    <location>
        <begin position="65"/>
        <end position="88"/>
    </location>
</feature>
<feature type="compositionally biased region" description="Acidic residues" evidence="3">
    <location>
        <begin position="103"/>
        <end position="136"/>
    </location>
</feature>
<feature type="compositionally biased region" description="Acidic residues" evidence="3">
    <location>
        <begin position="236"/>
        <end position="252"/>
    </location>
</feature>
<feature type="compositionally biased region" description="Basic and acidic residues" evidence="3">
    <location>
        <begin position="253"/>
        <end position="272"/>
    </location>
</feature>
<evidence type="ECO:0000250" key="1"/>
<evidence type="ECO:0000255" key="2">
    <source>
        <dbReference type="PROSITE-ProRule" id="PRU00277"/>
    </source>
</evidence>
<evidence type="ECO:0000256" key="3">
    <source>
        <dbReference type="SAM" id="MobiDB-lite"/>
    </source>
</evidence>
<evidence type="ECO:0000305" key="4"/>
<accession>Q6C4C9</accession>